<organism>
    <name type="scientific">Xenopus laevis</name>
    <name type="common">African clawed frog</name>
    <dbReference type="NCBI Taxonomy" id="8355"/>
    <lineage>
        <taxon>Eukaryota</taxon>
        <taxon>Metazoa</taxon>
        <taxon>Chordata</taxon>
        <taxon>Craniata</taxon>
        <taxon>Vertebrata</taxon>
        <taxon>Euteleostomi</taxon>
        <taxon>Amphibia</taxon>
        <taxon>Batrachia</taxon>
        <taxon>Anura</taxon>
        <taxon>Pipoidea</taxon>
        <taxon>Pipidae</taxon>
        <taxon>Xenopodinae</taxon>
        <taxon>Xenopus</taxon>
        <taxon>Xenopus</taxon>
    </lineage>
</organism>
<gene>
    <name type="primary">parpbp</name>
    <name type="synonym">pari</name>
</gene>
<sequence length="567" mass="63048">MDCPHQDVLHLIKYFRKEWPVVSDSERTTICGADNMLLTLQLALAEVNKQNGKEFSVSLSDVLLTWKYLVKHKLGLACEDTVVPKDYADIQKTYDLFLKNSNSLDLIDIYEKISTAGSSEAHFLSSEQLLDFLTNDVCLSEGTDFPIVSTPCKNNLDTVKVKPTLKRIFLAYLNLLVNAKNDFALAQVLNCPERGLGREAFTDLKHTSRLKNMSIFLVATSFIRTIELGGKGYAPSESDPLRKHLKGLSLFVHFIDRLNEIFGETHDPRTAGELLLSTIKMHLIKGRGSGDPLSEAATEVAQDLDLRIKYLINLVSEDKSSGTTGISPVRPKIRAINRGTASGGRETIKTLLKLLDEEAANPPSKNKADLLCADEENTLFGAFSLFTLFRSPEQTGSSPKALSQRVQKAINKDKPKLKHNLIRSQFACTYKDSNLTQTKQWDFPSMSQVPSCIHPAPKIVPVLCFDEEPLENDLQKGLKQSSGNIDLKTAEQVKNKPCKNVGNKRSKRKQVDIQSETTNGQENEPPQKKAVVELTSSKANKQGVSRNKASKNKLITGQAKLTSFFRV</sequence>
<protein>
    <recommendedName>
        <fullName>PCNA-interacting partner</fullName>
        <shortName>PARI</shortName>
    </recommendedName>
    <alternativeName>
        <fullName>PARP-1 binding protein</fullName>
    </alternativeName>
    <alternativeName>
        <fullName>PARP1-binding protein</fullName>
        <shortName>PARPBP</shortName>
    </alternativeName>
</protein>
<comment type="function">
    <text evidence="1">Required to suppress inappropriate homologous recombination, thereby playing a central role DNA repair and in the maintenance of genomic stability.</text>
</comment>
<comment type="subcellular location">
    <subcellularLocation>
        <location evidence="1">Cytoplasm</location>
    </subcellularLocation>
    <subcellularLocation>
        <location evidence="1">Nucleus</location>
    </subcellularLocation>
    <text evidence="1">Localizes to chromatin.</text>
</comment>
<comment type="similarity">
    <text evidence="3">Belongs to the PARI family.</text>
</comment>
<feature type="chain" id="PRO_0000280274" description="PCNA-interacting partner">
    <location>
        <begin position="1"/>
        <end position="567"/>
    </location>
</feature>
<feature type="region of interest" description="Disordered" evidence="2">
    <location>
        <begin position="485"/>
        <end position="552"/>
    </location>
</feature>
<feature type="compositionally biased region" description="Polar residues" evidence="2">
    <location>
        <begin position="512"/>
        <end position="524"/>
    </location>
</feature>
<feature type="compositionally biased region" description="Polar residues" evidence="2">
    <location>
        <begin position="534"/>
        <end position="552"/>
    </location>
</feature>
<proteinExistence type="evidence at transcript level"/>
<accession>Q32N66</accession>
<name>PARI_XENLA</name>
<dbReference type="EMBL" id="BC108807">
    <property type="protein sequence ID" value="AAI08808.1"/>
    <property type="molecule type" value="mRNA"/>
</dbReference>
<dbReference type="RefSeq" id="NP_001089910.1">
    <property type="nucleotide sequence ID" value="NM_001096441.1"/>
</dbReference>
<dbReference type="DNASU" id="734977"/>
<dbReference type="GeneID" id="734977"/>
<dbReference type="KEGG" id="xla:734977"/>
<dbReference type="AGR" id="Xenbase:XB-GENE-1004679"/>
<dbReference type="CTD" id="734977"/>
<dbReference type="Xenbase" id="XB-GENE-1004679">
    <property type="gene designation" value="parpbp.L"/>
</dbReference>
<dbReference type="OrthoDB" id="6427080at2759"/>
<dbReference type="Proteomes" id="UP000186698">
    <property type="component" value="Chromosome 3L"/>
</dbReference>
<dbReference type="Bgee" id="734977">
    <property type="expression patterns" value="Expressed in egg cell and 9 other cell types or tissues"/>
</dbReference>
<dbReference type="GO" id="GO:0000785">
    <property type="term" value="C:chromatin"/>
    <property type="evidence" value="ECO:0000250"/>
    <property type="project" value="UniProtKB"/>
</dbReference>
<dbReference type="GO" id="GO:0005737">
    <property type="term" value="C:cytoplasm"/>
    <property type="evidence" value="ECO:0007669"/>
    <property type="project" value="UniProtKB-SubCell"/>
</dbReference>
<dbReference type="GO" id="GO:0005634">
    <property type="term" value="C:nucleus"/>
    <property type="evidence" value="ECO:0007669"/>
    <property type="project" value="UniProtKB-SubCell"/>
</dbReference>
<dbReference type="GO" id="GO:0003677">
    <property type="term" value="F:DNA binding"/>
    <property type="evidence" value="ECO:0007669"/>
    <property type="project" value="UniProtKB-KW"/>
</dbReference>
<dbReference type="GO" id="GO:0006281">
    <property type="term" value="P:DNA repair"/>
    <property type="evidence" value="ECO:0007669"/>
    <property type="project" value="UniProtKB-KW"/>
</dbReference>
<dbReference type="GO" id="GO:2000042">
    <property type="term" value="P:negative regulation of double-strand break repair via homologous recombination"/>
    <property type="evidence" value="ECO:0000250"/>
    <property type="project" value="UniProtKB"/>
</dbReference>
<dbReference type="FunFam" id="1.10.486.10:FF:000004">
    <property type="entry name" value="PCNA-interacting partner isoform X3"/>
    <property type="match status" value="1"/>
</dbReference>
<dbReference type="Gene3D" id="1.10.486.10">
    <property type="entry name" value="PCRA, domain 4"/>
    <property type="match status" value="1"/>
</dbReference>
<dbReference type="InterPro" id="IPR038932">
    <property type="entry name" value="PARPBP"/>
</dbReference>
<dbReference type="PANTHER" id="PTHR32121">
    <property type="entry name" value="PCNA-INTERACTING PARTNER"/>
    <property type="match status" value="1"/>
</dbReference>
<dbReference type="PANTHER" id="PTHR32121:SF0">
    <property type="entry name" value="PCNA-INTERACTING PARTNER"/>
    <property type="match status" value="1"/>
</dbReference>
<reference key="1">
    <citation type="submission" date="2005-11" db="EMBL/GenBank/DDBJ databases">
        <authorList>
            <consortium name="NIH - Xenopus Gene Collection (XGC) project"/>
        </authorList>
    </citation>
    <scope>NUCLEOTIDE SEQUENCE [LARGE SCALE MRNA]</scope>
    <source>
        <tissue>Oocyte</tissue>
    </source>
</reference>
<evidence type="ECO:0000250" key="1"/>
<evidence type="ECO:0000256" key="2">
    <source>
        <dbReference type="SAM" id="MobiDB-lite"/>
    </source>
</evidence>
<evidence type="ECO:0000305" key="3"/>
<keyword id="KW-0963">Cytoplasm</keyword>
<keyword id="KW-0227">DNA damage</keyword>
<keyword id="KW-0234">DNA repair</keyword>
<keyword id="KW-0238">DNA-binding</keyword>
<keyword id="KW-0539">Nucleus</keyword>
<keyword id="KW-1185">Reference proteome</keyword>